<protein>
    <recommendedName>
        <fullName>Phosphoprotein</fullName>
        <shortName>Protein P</shortName>
    </recommendedName>
</protein>
<organismHost>
    <name type="scientific">Bos indicus</name>
    <name type="common">Zebu</name>
    <dbReference type="NCBI Taxonomy" id="9915"/>
</organismHost>
<organismHost>
    <name type="scientific">Bos taurus</name>
    <name type="common">Bovine</name>
    <dbReference type="NCBI Taxonomy" id="9913"/>
</organismHost>
<organismHost>
    <name type="scientific">Bubalus bubalis</name>
    <name type="common">Domestic water buffalo</name>
    <dbReference type="NCBI Taxonomy" id="89462"/>
</organismHost>
<organismHost>
    <name type="scientific">Capra hircus</name>
    <name type="common">Goat</name>
    <dbReference type="NCBI Taxonomy" id="9925"/>
</organismHost>
<organismHost>
    <name type="scientific">Gazella</name>
    <name type="common">gazelles</name>
    <dbReference type="NCBI Taxonomy" id="9933"/>
</organismHost>
<organismHost>
    <name type="scientific">Giraffa camelopardalis</name>
    <name type="common">Giraffe</name>
    <dbReference type="NCBI Taxonomy" id="9894"/>
</organismHost>
<organismHost>
    <name type="scientific">Hippopotamus</name>
    <dbReference type="NCBI Taxonomy" id="9832"/>
</organismHost>
<organismHost>
    <name type="scientific">Ovis aries</name>
    <name type="common">Sheep</name>
    <dbReference type="NCBI Taxonomy" id="9940"/>
</organismHost>
<organismHost>
    <name type="scientific">Suidae</name>
    <name type="common">pigs</name>
    <dbReference type="NCBI Taxonomy" id="9821"/>
</organismHost>
<comment type="function">
    <text evidence="2 3">Essential cofactor of the RNA polymerase L that plays a central role in the transcription and replication by forming the polymerase complex with RNA polymerase L and recruiting L to the genomic N-RNA template for RNA synthesis (By similarity). Also plays a central role in the encapsidation of nascent RNA chains by forming the encapsidation complex with the nucleocapsid protein N (N-P complex). Acts as a chaperone for newly synthesized free N protein, so-called N0, allowing encapsidation of nascent RNA chains during replication (By similarity). The nucleoprotein protein N prevents excessive phosphorylation of P, which leads to down-regulation of viral transcription/ replication. Participates, together with N, in the formation of viral factories (viroplasms), which are large inclusions in the host cytoplasm where replication takes place (By similarity).</text>
</comment>
<comment type="subunit">
    <text evidence="2 3">Homotetramer. Interacts (via multimerization domain) with polymerase L; this interaction forms the polymerase L-P complex (By similarity). Interacts (via N-terminus) with N0 (via Ncore); this interaction allows P to chaperon N0 to avoid N polymerization before encapsidation. Interacts (via C-terminus) with N-RNA template; this interaction positions the polymerase on the template for both transcription and replication (By similarity).</text>
</comment>
<comment type="domain">
    <text evidence="1 2 3">The N-terminus consists of a long intrinsically disordered tail. The central part contains the coiled-coil multimerization domain (PMD) (By similarity). Forms a four-stranded coiled coil structure (By similarity). The C-terminus constitutes the alpha-helical domain that binds to the nucleocapsid (N-RNA complex) (By similarity).</text>
</comment>
<comment type="PTM">
    <text evidence="3">Phosphorylation on serines by host CK2 is necessary for the formation of viral factories.</text>
</comment>
<comment type="RNA editing">
    <location>
        <position position="231" evidence="5"/>
    </location>
    <text>Partially edited. RNA editing at this position consists of an insertion of one guanine nucleotide. The sequence displayed here is the P protein, derived from the unedited RNA. The edited RNA version gives rise to the V protein (AC Q03340).</text>
</comment>
<comment type="similarity">
    <text evidence="6">Belongs to the morbillivirus P protein family.</text>
</comment>
<evidence type="ECO:0000250" key="1">
    <source>
        <dbReference type="UniProtKB" id="P04859"/>
    </source>
</evidence>
<evidence type="ECO:0000250" key="2">
    <source>
        <dbReference type="UniProtKB" id="P06162"/>
    </source>
</evidence>
<evidence type="ECO:0000250" key="3">
    <source>
        <dbReference type="UniProtKB" id="Q77M42"/>
    </source>
</evidence>
<evidence type="ECO:0000256" key="4">
    <source>
        <dbReference type="SAM" id="MobiDB-lite"/>
    </source>
</evidence>
<evidence type="ECO:0000269" key="5">
    <source>
    </source>
</evidence>
<evidence type="ECO:0000305" key="6"/>
<dbReference type="EMBL" id="X68311">
    <property type="protein sequence ID" value="CAA48389.1"/>
    <property type="molecule type" value="Genomic_RNA"/>
</dbReference>
<dbReference type="EMBL" id="Z30697">
    <property type="protein sequence ID" value="CAA83178.1"/>
    <property type="molecule type" value="Genomic_RNA"/>
</dbReference>
<dbReference type="PIR" id="JQ1929">
    <property type="entry name" value="JQ1929"/>
</dbReference>
<dbReference type="SMR" id="Q03335"/>
<dbReference type="Proteomes" id="UP000008654">
    <property type="component" value="Genome"/>
</dbReference>
<dbReference type="GO" id="GO:0003723">
    <property type="term" value="F:RNA binding"/>
    <property type="evidence" value="ECO:0007669"/>
    <property type="project" value="InterPro"/>
</dbReference>
<dbReference type="GO" id="GO:0003968">
    <property type="term" value="F:RNA-directed RNA polymerase activity"/>
    <property type="evidence" value="ECO:0007669"/>
    <property type="project" value="InterPro"/>
</dbReference>
<dbReference type="GO" id="GO:0006351">
    <property type="term" value="P:DNA-templated transcription"/>
    <property type="evidence" value="ECO:0007669"/>
    <property type="project" value="InterPro"/>
</dbReference>
<dbReference type="GO" id="GO:0019079">
    <property type="term" value="P:viral genome replication"/>
    <property type="evidence" value="ECO:0007669"/>
    <property type="project" value="InterPro"/>
</dbReference>
<dbReference type="CDD" id="cd21031">
    <property type="entry name" value="MEV_P-protein-C_like"/>
    <property type="match status" value="1"/>
</dbReference>
<dbReference type="Gene3D" id="1.20.5.110">
    <property type="match status" value="1"/>
</dbReference>
<dbReference type="Gene3D" id="1.10.8.10">
    <property type="entry name" value="DNA helicase RuvA subunit, C-terminal domain"/>
    <property type="match status" value="1"/>
</dbReference>
<dbReference type="InterPro" id="IPR004897">
    <property type="entry name" value="P/V_Pprotein_paramyxoviral"/>
</dbReference>
<dbReference type="InterPro" id="IPR028243">
    <property type="entry name" value="Paramyxo_P/V_N"/>
</dbReference>
<dbReference type="InterPro" id="IPR016075">
    <property type="entry name" value="RNA_pol_Pprot-P_XD_paramyxovir"/>
</dbReference>
<dbReference type="Pfam" id="PF03210">
    <property type="entry name" value="Paramyx_P_V_C"/>
    <property type="match status" value="1"/>
</dbReference>
<dbReference type="Pfam" id="PF13825">
    <property type="entry name" value="Paramyxo_P_V_N"/>
    <property type="match status" value="1"/>
</dbReference>
<dbReference type="SUPFAM" id="SSF101089">
    <property type="entry name" value="Phosphoprotein XD domain"/>
    <property type="match status" value="1"/>
</dbReference>
<accession>Q03335</accession>
<name>PHOSP_RINDR</name>
<gene>
    <name type="primary">P/V</name>
</gene>
<organism>
    <name type="scientific">Rinderpest virus (strain RBOK)</name>
    <name type="common">RDV</name>
    <dbReference type="NCBI Taxonomy" id="36409"/>
    <lineage>
        <taxon>Viruses</taxon>
        <taxon>Riboviria</taxon>
        <taxon>Orthornavirae</taxon>
        <taxon>Negarnaviricota</taxon>
        <taxon>Haploviricotina</taxon>
        <taxon>Monjiviricetes</taxon>
        <taxon>Mononegavirales</taxon>
        <taxon>Paramyxoviridae</taxon>
        <taxon>Orthoparamyxovirinae</taxon>
        <taxon>Morbillivirus</taxon>
        <taxon>Morbillivirus pecoris</taxon>
        <taxon>Rinderpest morbillivirus</taxon>
    </lineage>
</organism>
<sequence length="507" mass="54502">MAEEQAYHVNKGLECIKALRARPLDPLVVEEALAAWVETSEGQTLDRMSSDEAEADHQDISKPCFPAAGPGKSSMSRCHDQGLRGSNSCDEELGAFIGDSSMHSTEVQHYHVYDHSGEKVEGVEDADSILVQSGADDGVEVWGGDEESENSDVDSGEPDPEGSAPADWGSSPISPATRASDVETVEGDEIQKLLEDQSRIRKMTKAGKTLVVPPIPSQERPTASEKPIKKGTDVKSTSSGTMAESSSTGGATRPALKSQWGPSGPNASAENALASASNVSPTQGSKTESGTTTSRISQSNIEPEDDYDDELFSDIQDIKTALAKLHDDQQIIITRLESLLSLKGEIDSIKKQISKQNISISTIEGHLSSFMIAIPGFGKDPNDPTADVDINPDLRPIIGRDSGRALAEVLKKPASERQSKDTGKLGIESKGLLKKEFQLKPIEKKSSSAIRFVPDGSVASRSVIRSIIKSSHLGEDRKDYLMSLLNDIQGSKDLAQFHQMLVKILKN</sequence>
<reference key="1">
    <citation type="journal article" date="1993" name="J. Gen. Virol.">
        <title>Cloning and sequence analysis of the phosphoprotein gene of rinderpest virus.</title>
        <authorList>
            <person name="Baron M.D."/>
            <person name="Shaila M.S."/>
            <person name="Barrett T."/>
        </authorList>
    </citation>
    <scope>NUCLEOTIDE SEQUENCE [GENOMIC RNA]</scope>
    <scope>RNA EDITING</scope>
</reference>
<feature type="chain" id="PRO_0000142710" description="Phosphoprotein">
    <location>
        <begin position="1"/>
        <end position="507"/>
    </location>
</feature>
<feature type="region of interest" description="Disordered" evidence="4">
    <location>
        <begin position="56"/>
        <end position="79"/>
    </location>
</feature>
<feature type="region of interest" description="Disordered" evidence="4">
    <location>
        <begin position="137"/>
        <end position="307"/>
    </location>
</feature>
<feature type="region of interest" description="Multimerization" evidence="3">
    <location>
        <begin position="304"/>
        <end position="376"/>
    </location>
</feature>
<feature type="region of interest" description="Interaction with the nucleocapsid (N-RNA)" evidence="3">
    <location>
        <begin position="459"/>
        <end position="507"/>
    </location>
</feature>
<feature type="compositionally biased region" description="Acidic residues" evidence="4">
    <location>
        <begin position="137"/>
        <end position="160"/>
    </location>
</feature>
<feature type="compositionally biased region" description="Basic and acidic residues" evidence="4">
    <location>
        <begin position="189"/>
        <end position="199"/>
    </location>
</feature>
<feature type="compositionally biased region" description="Basic and acidic residues" evidence="4">
    <location>
        <begin position="222"/>
        <end position="233"/>
    </location>
</feature>
<feature type="compositionally biased region" description="Low complexity" evidence="4">
    <location>
        <begin position="236"/>
        <end position="252"/>
    </location>
</feature>
<feature type="compositionally biased region" description="Low complexity" evidence="4">
    <location>
        <begin position="266"/>
        <end position="278"/>
    </location>
</feature>
<feature type="compositionally biased region" description="Polar residues" evidence="4">
    <location>
        <begin position="279"/>
        <end position="301"/>
    </location>
</feature>
<feature type="modified residue" description="Phosphoserine" evidence="3">
    <location>
        <position position="86"/>
    </location>
</feature>
<feature type="modified residue" description="Phosphoserine" evidence="3">
    <location>
        <position position="151"/>
    </location>
</feature>
<proteinExistence type="inferred from homology"/>
<keyword id="KW-0597">Phosphoprotein</keyword>
<keyword id="KW-1185">Reference proteome</keyword>
<keyword id="KW-0691">RNA editing</keyword>
<keyword id="KW-0693">Viral RNA replication</keyword>